<evidence type="ECO:0000250" key="1"/>
<evidence type="ECO:0000305" key="2"/>
<reference key="1">
    <citation type="journal article" date="2008" name="PLoS Genet.">
        <title>Genomic islands in the pathogenic filamentous fungus Aspergillus fumigatus.</title>
        <authorList>
            <person name="Fedorova N.D."/>
            <person name="Khaldi N."/>
            <person name="Joardar V.S."/>
            <person name="Maiti R."/>
            <person name="Amedeo P."/>
            <person name="Anderson M.J."/>
            <person name="Crabtree J."/>
            <person name="Silva J.C."/>
            <person name="Badger J.H."/>
            <person name="Albarraq A."/>
            <person name="Angiuoli S."/>
            <person name="Bussey H."/>
            <person name="Bowyer P."/>
            <person name="Cotty P.J."/>
            <person name="Dyer P.S."/>
            <person name="Egan A."/>
            <person name="Galens K."/>
            <person name="Fraser-Liggett C.M."/>
            <person name="Haas B.J."/>
            <person name="Inman J.M."/>
            <person name="Kent R."/>
            <person name="Lemieux S."/>
            <person name="Malavazi I."/>
            <person name="Orvis J."/>
            <person name="Roemer T."/>
            <person name="Ronning C.M."/>
            <person name="Sundaram J.P."/>
            <person name="Sutton G."/>
            <person name="Turner G."/>
            <person name="Venter J.C."/>
            <person name="White O.R."/>
            <person name="Whitty B.R."/>
            <person name="Youngman P."/>
            <person name="Wolfe K.H."/>
            <person name="Goldman G.H."/>
            <person name="Wortman J.R."/>
            <person name="Jiang B."/>
            <person name="Denning D.W."/>
            <person name="Nierman W.C."/>
        </authorList>
    </citation>
    <scope>NUCLEOTIDE SEQUENCE [LARGE SCALE GENOMIC DNA]</scope>
    <source>
        <strain>ATCC 1007 / CBS 513.65 / DSM 816 / NCTC 3887 / NRRL 1 / QM 1276 / 107</strain>
    </source>
</reference>
<gene>
    <name type="primary">xkiA</name>
    <name type="ORF">ACLA_012890</name>
</gene>
<sequence length="573" mass="63148">MASQGPLYIGFDLSTQQLKGLVVNSELKVVHISKFDFDADSRGFSIKKGVLTNEAEHEVFAPVALWLQALDGVLDGLRKQGLDFSRVRGISGAGQQHGSVYWGENAEKLLGGLDAGKTLEEQLSGAFSHPFSPNWQDASTQKECDEFDAVLGGPEQLAEATGSKAHHRFTGPQILRFQRKYPEVYKKTSRISLVSSFLASLLLGHIAPMDISDVCGMNLWNIRKGAYDEDLLKLCAGPFGMEDLKRKLGDVPEDGGLHLGKINKYYIDRYGFSSDCEILPSTGDNPATILALPLRPSDAMVSLGTSTTFLMSTPSYKPDPATHFFNHPTTPGLYMFMLCYKNGGLAREHVRDAINEKLGSPASQSWENFDRITLETPPLGQKSESDPMKLGLFFPRPEIVPNLRSGQWRFNYNPANETLTESNDGWNNPSDEARAIVESQMLSLRLRSRGLTQSPGAKIPPQPRRVYLVGGGSKNKAIAKVAGEILGGSDGVYKLDVGDNACALGAAYKAVWAMERTPGQTFEDLIGQRWREEEFIEKIADGYQKGVFEKYGNAVEGFEKMEHQVLEQEAARK</sequence>
<dbReference type="EC" id="2.7.1.17"/>
<dbReference type="EMBL" id="DS027049">
    <property type="protein sequence ID" value="EAW12861.1"/>
    <property type="molecule type" value="Genomic_DNA"/>
</dbReference>
<dbReference type="RefSeq" id="XP_001274287.1">
    <property type="nucleotide sequence ID" value="XM_001274286.1"/>
</dbReference>
<dbReference type="SMR" id="A1CAU3"/>
<dbReference type="STRING" id="344612.A1CAU3"/>
<dbReference type="EnsemblFungi" id="EAW12861">
    <property type="protein sequence ID" value="EAW12861"/>
    <property type="gene ID" value="ACLA_012890"/>
</dbReference>
<dbReference type="GeneID" id="4706424"/>
<dbReference type="KEGG" id="act:ACLA_012890"/>
<dbReference type="VEuPathDB" id="FungiDB:ACLA_012890"/>
<dbReference type="eggNOG" id="KOG2531">
    <property type="taxonomic scope" value="Eukaryota"/>
</dbReference>
<dbReference type="HOGENOM" id="CLU_016149_5_0_1"/>
<dbReference type="OMA" id="NSCALGG"/>
<dbReference type="OrthoDB" id="1728974at2759"/>
<dbReference type="Proteomes" id="UP000006701">
    <property type="component" value="Unassembled WGS sequence"/>
</dbReference>
<dbReference type="GO" id="GO:0005829">
    <property type="term" value="C:cytosol"/>
    <property type="evidence" value="ECO:0007669"/>
    <property type="project" value="TreeGrafter"/>
</dbReference>
<dbReference type="GO" id="GO:0005524">
    <property type="term" value="F:ATP binding"/>
    <property type="evidence" value="ECO:0007669"/>
    <property type="project" value="UniProtKB-KW"/>
</dbReference>
<dbReference type="GO" id="GO:0004856">
    <property type="term" value="F:D-xylulokinase activity"/>
    <property type="evidence" value="ECO:0007669"/>
    <property type="project" value="UniProtKB-EC"/>
</dbReference>
<dbReference type="GO" id="GO:0042732">
    <property type="term" value="P:D-xylose metabolic process"/>
    <property type="evidence" value="ECO:0007669"/>
    <property type="project" value="UniProtKB-KW"/>
</dbReference>
<dbReference type="GO" id="GO:0005997">
    <property type="term" value="P:xylulose metabolic process"/>
    <property type="evidence" value="ECO:0007669"/>
    <property type="project" value="TreeGrafter"/>
</dbReference>
<dbReference type="CDD" id="cd07776">
    <property type="entry name" value="ASKHA_NBD_FGGY_SpXK-like"/>
    <property type="match status" value="1"/>
</dbReference>
<dbReference type="FunFam" id="3.30.420.40:FF:000118">
    <property type="entry name" value="Xylulose kinase 2"/>
    <property type="match status" value="1"/>
</dbReference>
<dbReference type="Gene3D" id="3.30.420.40">
    <property type="match status" value="2"/>
</dbReference>
<dbReference type="InterPro" id="IPR043129">
    <property type="entry name" value="ATPase_NBD"/>
</dbReference>
<dbReference type="InterPro" id="IPR042024">
    <property type="entry name" value="D-XK_euk"/>
</dbReference>
<dbReference type="InterPro" id="IPR018485">
    <property type="entry name" value="FGGY_C"/>
</dbReference>
<dbReference type="InterPro" id="IPR018484">
    <property type="entry name" value="FGGY_N"/>
</dbReference>
<dbReference type="PANTHER" id="PTHR10196">
    <property type="entry name" value="SUGAR KINASE"/>
    <property type="match status" value="1"/>
</dbReference>
<dbReference type="PANTHER" id="PTHR10196:SF57">
    <property type="entry name" value="XYLULOSE KINASE"/>
    <property type="match status" value="1"/>
</dbReference>
<dbReference type="Pfam" id="PF02782">
    <property type="entry name" value="FGGY_C"/>
    <property type="match status" value="1"/>
</dbReference>
<dbReference type="Pfam" id="PF00370">
    <property type="entry name" value="FGGY_N"/>
    <property type="match status" value="1"/>
</dbReference>
<dbReference type="SUPFAM" id="SSF53067">
    <property type="entry name" value="Actin-like ATPase domain"/>
    <property type="match status" value="2"/>
</dbReference>
<accession>A1CAU3</accession>
<keyword id="KW-0067">ATP-binding</keyword>
<keyword id="KW-0119">Carbohydrate metabolism</keyword>
<keyword id="KW-0963">Cytoplasm</keyword>
<keyword id="KW-0418">Kinase</keyword>
<keyword id="KW-0547">Nucleotide-binding</keyword>
<keyword id="KW-1185">Reference proteome</keyword>
<keyword id="KW-0808">Transferase</keyword>
<keyword id="KW-0859">Xylose metabolism</keyword>
<protein>
    <recommendedName>
        <fullName>Probable D-xylulose kinase A</fullName>
        <shortName>Xylulokinase A</shortName>
        <ecNumber>2.7.1.17</ecNumber>
    </recommendedName>
</protein>
<feature type="chain" id="PRO_0000393516" description="Probable D-xylulose kinase A">
    <location>
        <begin position="1"/>
        <end position="573"/>
    </location>
</feature>
<feature type="binding site" evidence="1">
    <location>
        <position position="97"/>
    </location>
    <ligand>
        <name>substrate</name>
    </ligand>
</feature>
<feature type="binding site" evidence="1">
    <location>
        <position position="168"/>
    </location>
    <ligand>
        <name>substrate</name>
    </ligand>
</feature>
<feature type="binding site" evidence="1">
    <location>
        <position position="284"/>
    </location>
    <ligand>
        <name>substrate</name>
    </ligand>
</feature>
<feature type="binding site" evidence="1">
    <location>
        <position position="285"/>
    </location>
    <ligand>
        <name>substrate</name>
    </ligand>
</feature>
<feature type="binding site" evidence="1">
    <location>
        <position position="366"/>
    </location>
    <ligand>
        <name>ATP</name>
        <dbReference type="ChEBI" id="CHEBI:30616"/>
    </ligand>
</feature>
<feature type="binding site" evidence="1">
    <location>
        <begin position="471"/>
        <end position="472"/>
    </location>
    <ligand>
        <name>ATP</name>
        <dbReference type="ChEBI" id="CHEBI:30616"/>
    </ligand>
</feature>
<feature type="binding site" evidence="1">
    <location>
        <position position="475"/>
    </location>
    <ligand>
        <name>ATP</name>
        <dbReference type="ChEBI" id="CHEBI:30616"/>
    </ligand>
</feature>
<name>XKS1_ASPCL</name>
<proteinExistence type="evidence at transcript level"/>
<comment type="function">
    <text evidence="1">Highly specific D-xylulose kinase which participates in the catabolism of xylose. Xylose is a major component of hemicelluloses such as xylan. Most fungi utilize D-xylose via three enzymatic reactions, xylose reductase (XR), xylitol dehydrogenase (XDH), and xylulokinase, to form xylulose 5-phosphate, which enters pentose phosphate pathway (By similarity).</text>
</comment>
<comment type="catalytic activity">
    <reaction>
        <text>D-xylulose + ATP = D-xylulose 5-phosphate + ADP + H(+)</text>
        <dbReference type="Rhea" id="RHEA:10964"/>
        <dbReference type="ChEBI" id="CHEBI:15378"/>
        <dbReference type="ChEBI" id="CHEBI:17140"/>
        <dbReference type="ChEBI" id="CHEBI:30616"/>
        <dbReference type="ChEBI" id="CHEBI:57737"/>
        <dbReference type="ChEBI" id="CHEBI:456216"/>
        <dbReference type="EC" id="2.7.1.17"/>
    </reaction>
</comment>
<comment type="subcellular location">
    <subcellularLocation>
        <location evidence="1">Cytoplasm</location>
    </subcellularLocation>
</comment>
<comment type="induction">
    <text>By D-xylose, L-arabinose or L-arabitol.</text>
</comment>
<comment type="similarity">
    <text evidence="2">Belongs to the FGGY kinase family.</text>
</comment>
<organism>
    <name type="scientific">Aspergillus clavatus (strain ATCC 1007 / CBS 513.65 / DSM 816 / NCTC 3887 / NRRL 1 / QM 1276 / 107)</name>
    <dbReference type="NCBI Taxonomy" id="344612"/>
    <lineage>
        <taxon>Eukaryota</taxon>
        <taxon>Fungi</taxon>
        <taxon>Dikarya</taxon>
        <taxon>Ascomycota</taxon>
        <taxon>Pezizomycotina</taxon>
        <taxon>Eurotiomycetes</taxon>
        <taxon>Eurotiomycetidae</taxon>
        <taxon>Eurotiales</taxon>
        <taxon>Aspergillaceae</taxon>
        <taxon>Aspergillus</taxon>
        <taxon>Aspergillus subgen. Fumigati</taxon>
    </lineage>
</organism>